<proteinExistence type="inferred from homology"/>
<sequence length="215" mass="23946">MLQVYLVRHGETEWNAARRIQGQSDSPLTANGEHQARLVAQRVSKQGITHVITSDLGRTRRTAQIIAEACGCEVINDPRLRELHMGVLEERLIDSLTPQEEQWRKQMVDGTADGRIPQGESMSELGDRMREALESCLMLPEGSKPLIVSHGIALGCLISTVLGLPAYAERRLRLRNCSLSRVDHQQSPWLASGWIVETAGDVTHLDTPALDELQR</sequence>
<gene>
    <name evidence="1" type="primary">gpmB</name>
    <name type="ordered locus">Spro_0678</name>
</gene>
<organism>
    <name type="scientific">Serratia proteamaculans (strain 568)</name>
    <dbReference type="NCBI Taxonomy" id="399741"/>
    <lineage>
        <taxon>Bacteria</taxon>
        <taxon>Pseudomonadati</taxon>
        <taxon>Pseudomonadota</taxon>
        <taxon>Gammaproteobacteria</taxon>
        <taxon>Enterobacterales</taxon>
        <taxon>Yersiniaceae</taxon>
        <taxon>Serratia</taxon>
    </lineage>
</organism>
<comment type="catalytic activity">
    <reaction evidence="1">
        <text>(2R)-2-phosphoglycerate = (2R)-3-phosphoglycerate</text>
        <dbReference type="Rhea" id="RHEA:15901"/>
        <dbReference type="ChEBI" id="CHEBI:58272"/>
        <dbReference type="ChEBI" id="CHEBI:58289"/>
    </reaction>
</comment>
<comment type="pathway">
    <text evidence="1">Carbohydrate degradation; glycolysis; pyruvate from D-glyceraldehyde 3-phosphate: step 3/5.</text>
</comment>
<comment type="similarity">
    <text evidence="1">Belongs to the phosphoglycerate mutase family. GpmB subfamily.</text>
</comment>
<accession>A8G9J4</accession>
<feature type="chain" id="PRO_1000064130" description="Probable phosphoglycerate mutase GpmB">
    <location>
        <begin position="1"/>
        <end position="215"/>
    </location>
</feature>
<feature type="active site" description="Tele-phosphohistidine intermediate" evidence="1">
    <location>
        <position position="9"/>
    </location>
</feature>
<feature type="active site" description="Proton donor/acceptor" evidence="1">
    <location>
        <position position="82"/>
    </location>
</feature>
<feature type="binding site" evidence="1">
    <location>
        <begin position="8"/>
        <end position="15"/>
    </location>
    <ligand>
        <name>substrate</name>
    </ligand>
</feature>
<feature type="binding site" evidence="1">
    <location>
        <begin position="21"/>
        <end position="22"/>
    </location>
    <ligand>
        <name>substrate</name>
    </ligand>
</feature>
<feature type="binding site" evidence="1">
    <location>
        <position position="58"/>
    </location>
    <ligand>
        <name>substrate</name>
    </ligand>
</feature>
<feature type="binding site" evidence="1">
    <location>
        <position position="60"/>
    </location>
    <ligand>
        <name>substrate</name>
    </ligand>
</feature>
<feature type="binding site" evidence="1">
    <location>
        <begin position="82"/>
        <end position="85"/>
    </location>
    <ligand>
        <name>substrate</name>
    </ligand>
</feature>
<feature type="binding site" evidence="1">
    <location>
        <begin position="151"/>
        <end position="152"/>
    </location>
    <ligand>
        <name>substrate</name>
    </ligand>
</feature>
<feature type="site" description="Transition state stabilizer" evidence="1">
    <location>
        <position position="150"/>
    </location>
</feature>
<evidence type="ECO:0000255" key="1">
    <source>
        <dbReference type="HAMAP-Rule" id="MF_01040"/>
    </source>
</evidence>
<name>GPMB_SERP5</name>
<protein>
    <recommendedName>
        <fullName evidence="1">Probable phosphoglycerate mutase GpmB</fullName>
        <ecNumber evidence="1">5.4.2.-</ecNumber>
    </recommendedName>
    <alternativeName>
        <fullName evidence="1">PGAM</fullName>
    </alternativeName>
    <alternativeName>
        <fullName evidence="1">Phosphoglyceromutase</fullName>
    </alternativeName>
</protein>
<dbReference type="EC" id="5.4.2.-" evidence="1"/>
<dbReference type="EMBL" id="CP000826">
    <property type="protein sequence ID" value="ABV39784.1"/>
    <property type="molecule type" value="Genomic_DNA"/>
</dbReference>
<dbReference type="SMR" id="A8G9J4"/>
<dbReference type="STRING" id="399741.Spro_0678"/>
<dbReference type="KEGG" id="spe:Spro_0678"/>
<dbReference type="eggNOG" id="COG0406">
    <property type="taxonomic scope" value="Bacteria"/>
</dbReference>
<dbReference type="HOGENOM" id="CLU_033323_9_5_6"/>
<dbReference type="OrthoDB" id="9783269at2"/>
<dbReference type="UniPathway" id="UPA00109">
    <property type="reaction ID" value="UER00186"/>
</dbReference>
<dbReference type="GO" id="GO:0005737">
    <property type="term" value="C:cytoplasm"/>
    <property type="evidence" value="ECO:0007669"/>
    <property type="project" value="TreeGrafter"/>
</dbReference>
<dbReference type="GO" id="GO:0016791">
    <property type="term" value="F:phosphatase activity"/>
    <property type="evidence" value="ECO:0007669"/>
    <property type="project" value="TreeGrafter"/>
</dbReference>
<dbReference type="GO" id="GO:0004619">
    <property type="term" value="F:phosphoglycerate mutase activity"/>
    <property type="evidence" value="ECO:0007669"/>
    <property type="project" value="UniProtKB-UniRule"/>
</dbReference>
<dbReference type="GO" id="GO:0006096">
    <property type="term" value="P:glycolytic process"/>
    <property type="evidence" value="ECO:0007669"/>
    <property type="project" value="UniProtKB-UniRule"/>
</dbReference>
<dbReference type="CDD" id="cd07067">
    <property type="entry name" value="HP_PGM_like"/>
    <property type="match status" value="1"/>
</dbReference>
<dbReference type="Gene3D" id="3.40.50.1240">
    <property type="entry name" value="Phosphoglycerate mutase-like"/>
    <property type="match status" value="1"/>
</dbReference>
<dbReference type="HAMAP" id="MF_01040">
    <property type="entry name" value="PGAM_GpmB"/>
    <property type="match status" value="1"/>
</dbReference>
<dbReference type="InterPro" id="IPR013078">
    <property type="entry name" value="His_Pase_superF_clade-1"/>
</dbReference>
<dbReference type="InterPro" id="IPR029033">
    <property type="entry name" value="His_PPase_superfam"/>
</dbReference>
<dbReference type="InterPro" id="IPR001345">
    <property type="entry name" value="PG/BPGM_mutase_AS"/>
</dbReference>
<dbReference type="InterPro" id="IPR050275">
    <property type="entry name" value="PGM_Phosphatase"/>
</dbReference>
<dbReference type="InterPro" id="IPR023086">
    <property type="entry name" value="Phosphoglycerate_mutase_GpmB"/>
</dbReference>
<dbReference type="NCBIfam" id="NF002901">
    <property type="entry name" value="PRK03482.1"/>
    <property type="match status" value="1"/>
</dbReference>
<dbReference type="PANTHER" id="PTHR48100">
    <property type="entry name" value="BROAD-SPECIFICITY PHOSPHATASE YOR283W-RELATED"/>
    <property type="match status" value="1"/>
</dbReference>
<dbReference type="PANTHER" id="PTHR48100:SF1">
    <property type="entry name" value="HISTIDINE PHOSPHATASE FAMILY PROTEIN-RELATED"/>
    <property type="match status" value="1"/>
</dbReference>
<dbReference type="Pfam" id="PF00300">
    <property type="entry name" value="His_Phos_1"/>
    <property type="match status" value="1"/>
</dbReference>
<dbReference type="SMART" id="SM00855">
    <property type="entry name" value="PGAM"/>
    <property type="match status" value="1"/>
</dbReference>
<dbReference type="SUPFAM" id="SSF53254">
    <property type="entry name" value="Phosphoglycerate mutase-like"/>
    <property type="match status" value="1"/>
</dbReference>
<dbReference type="PROSITE" id="PS00175">
    <property type="entry name" value="PG_MUTASE"/>
    <property type="match status" value="1"/>
</dbReference>
<reference key="1">
    <citation type="submission" date="2007-09" db="EMBL/GenBank/DDBJ databases">
        <title>Complete sequence of chromosome of Serratia proteamaculans 568.</title>
        <authorList>
            <consortium name="US DOE Joint Genome Institute"/>
            <person name="Copeland A."/>
            <person name="Lucas S."/>
            <person name="Lapidus A."/>
            <person name="Barry K."/>
            <person name="Glavina del Rio T."/>
            <person name="Dalin E."/>
            <person name="Tice H."/>
            <person name="Pitluck S."/>
            <person name="Chain P."/>
            <person name="Malfatti S."/>
            <person name="Shin M."/>
            <person name="Vergez L."/>
            <person name="Schmutz J."/>
            <person name="Larimer F."/>
            <person name="Land M."/>
            <person name="Hauser L."/>
            <person name="Kyrpides N."/>
            <person name="Kim E."/>
            <person name="Taghavi S."/>
            <person name="Newman L."/>
            <person name="Vangronsveld J."/>
            <person name="van der Lelie D."/>
            <person name="Richardson P."/>
        </authorList>
    </citation>
    <scope>NUCLEOTIDE SEQUENCE [LARGE SCALE GENOMIC DNA]</scope>
    <source>
        <strain>568</strain>
    </source>
</reference>
<keyword id="KW-0324">Glycolysis</keyword>
<keyword id="KW-0413">Isomerase</keyword>